<keyword id="KW-0150">Chloroplast</keyword>
<keyword id="KW-0240">DNA-directed RNA polymerase</keyword>
<keyword id="KW-0460">Magnesium</keyword>
<keyword id="KW-0479">Metal-binding</keyword>
<keyword id="KW-0548">Nucleotidyltransferase</keyword>
<keyword id="KW-0934">Plastid</keyword>
<keyword id="KW-0691">RNA editing</keyword>
<keyword id="KW-0804">Transcription</keyword>
<keyword id="KW-0808">Transferase</keyword>
<keyword id="KW-0862">Zinc</keyword>
<gene>
    <name evidence="1" type="primary">rpoC1</name>
</gene>
<accession>Q85CL6</accession>
<reference key="1">
    <citation type="journal article" date="2003" name="Nucleic Acids Res.">
        <title>The complete nucleotide sequence of the hornwort (Anthoceros formosae) chloroplast genome: insight into the earliest land plants.</title>
        <authorList>
            <person name="Kugita M."/>
            <person name="Kaneko A."/>
            <person name="Yamamoto Y."/>
            <person name="Takeya Y."/>
            <person name="Matsumoto T."/>
            <person name="Yoshinaga K."/>
        </authorList>
    </citation>
    <scope>NUCLEOTIDE SEQUENCE [LARGE SCALE GENOMIC DNA]</scope>
    <scope>RNA EDITING</scope>
</reference>
<reference key="2">
    <citation type="journal article" date="2003" name="Nucleic Acids Res.">
        <title>RNA editing in hornwort chloroplasts makes more than half the genes functional.</title>
        <authorList>
            <person name="Kugita M."/>
            <person name="Yamamoto Y."/>
            <person name="Fujikawa T."/>
            <person name="Matsumoto T."/>
            <person name="Yoshinaga K."/>
        </authorList>
    </citation>
    <scope>NUCLEOTIDE SEQUENCE [MRNA]</scope>
    <scope>RNA EDITING</scope>
    <source>
        <tissue>Thallus</tissue>
    </source>
</reference>
<comment type="function">
    <text evidence="1">DNA-dependent RNA polymerase catalyzes the transcription of DNA into RNA using the four ribonucleoside triphosphates as substrates.</text>
</comment>
<comment type="catalytic activity">
    <reaction evidence="1">
        <text>RNA(n) + a ribonucleoside 5'-triphosphate = RNA(n+1) + diphosphate</text>
        <dbReference type="Rhea" id="RHEA:21248"/>
        <dbReference type="Rhea" id="RHEA-COMP:14527"/>
        <dbReference type="Rhea" id="RHEA-COMP:17342"/>
        <dbReference type="ChEBI" id="CHEBI:33019"/>
        <dbReference type="ChEBI" id="CHEBI:61557"/>
        <dbReference type="ChEBI" id="CHEBI:140395"/>
        <dbReference type="EC" id="2.7.7.6"/>
    </reaction>
</comment>
<comment type="cofactor">
    <cofactor evidence="1">
        <name>Mg(2+)</name>
        <dbReference type="ChEBI" id="CHEBI:18420"/>
    </cofactor>
    <text evidence="1">Binds 1 Mg(2+) ion per subunit.</text>
</comment>
<comment type="cofactor">
    <cofactor evidence="1">
        <name>Zn(2+)</name>
        <dbReference type="ChEBI" id="CHEBI:29105"/>
    </cofactor>
    <text evidence="1">Binds 1 Zn(2+) ion per subunit.</text>
</comment>
<comment type="subunit">
    <text evidence="1">In plastids the minimal PEP RNA polymerase catalytic core is composed of four subunits: alpha, beta, beta', and beta''. When a (nuclear-encoded) sigma factor is associated with the core the holoenzyme is formed, which can initiate transcription.</text>
</comment>
<comment type="subcellular location">
    <subcellularLocation>
        <location evidence="1">Plastid</location>
        <location evidence="1">Chloroplast</location>
    </subcellularLocation>
</comment>
<comment type="RNA editing">
    <location>
        <position position="43" evidence="2 3"/>
    </location>
    <location>
        <position position="56" evidence="2 3"/>
    </location>
    <location>
        <position position="87" evidence="2 3"/>
    </location>
    <location>
        <position position="123" evidence="2 3"/>
    </location>
    <location>
        <position position="238" evidence="2 3"/>
    </location>
    <location>
        <position position="240" evidence="2 3"/>
    </location>
    <location>
        <position position="270" evidence="2 3"/>
    </location>
    <location>
        <position position="273" evidence="2 3"/>
    </location>
    <location>
        <position position="290" evidence="2 3"/>
    </location>
    <location>
        <position position="296" evidence="2 3"/>
    </location>
    <location>
        <position position="335" evidence="2 3"/>
    </location>
    <location>
        <position position="341" evidence="2 3"/>
    </location>
    <location>
        <position position="344" evidence="2 3"/>
    </location>
    <location>
        <position position="355" evidence="2 3"/>
    </location>
    <location>
        <position position="368" evidence="2 3"/>
    </location>
    <location>
        <position position="375" evidence="2 3"/>
    </location>
    <location>
        <position position="384" evidence="2 3"/>
    </location>
    <location>
        <position position="390" evidence="2 3"/>
    </location>
    <location>
        <position position="398" evidence="2 3"/>
    </location>
    <location>
        <position position="406" evidence="2 3"/>
    </location>
    <location>
        <position position="435" evidence="2 3"/>
    </location>
    <location>
        <position position="457" evidence="2 3"/>
    </location>
    <location>
        <position position="466" evidence="2 3"/>
    </location>
    <location>
        <position position="477" evidence="2 3"/>
    </location>
    <location>
        <position position="481" evidence="2 3"/>
    </location>
    <location>
        <position position="486" evidence="2 3"/>
    </location>
    <location>
        <position position="494" evidence="2 3"/>
    </location>
    <location>
        <position position="512" evidence="2 3"/>
    </location>
    <location>
        <position position="523" evidence="2 3"/>
    </location>
    <location>
        <position position="548" evidence="2 3"/>
    </location>
    <location>
        <position position="653" evidence="2 3"/>
    </location>
    <location>
        <position position="654" evidence="2 3"/>
    </location>
    <text>The nonsense codons at positions 240, 344, 375, 494 and 548 are modified to sense codons.</text>
</comment>
<comment type="similarity">
    <text evidence="1 4">Belongs to the RNA polymerase beta' chain family. RpoC1 subfamily.</text>
</comment>
<name>RPOC1_ANTAG</name>
<protein>
    <recommendedName>
        <fullName evidence="1">DNA-directed RNA polymerase subunit beta'</fullName>
        <ecNumber evidence="1">2.7.7.6</ecNumber>
    </recommendedName>
    <alternativeName>
        <fullName evidence="1">PEP</fullName>
    </alternativeName>
    <alternativeName>
        <fullName evidence="1">Plastid-encoded RNA polymerase subunit beta'</fullName>
        <shortName evidence="1">RNA polymerase subunit beta'</shortName>
    </alternativeName>
</protein>
<feature type="chain" id="PRO_0000067860" description="DNA-directed RNA polymerase subunit beta'">
    <location>
        <begin position="1"/>
        <end position="681"/>
    </location>
</feature>
<feature type="binding site" evidence="1">
    <location>
        <position position="69"/>
    </location>
    <ligand>
        <name>Zn(2+)</name>
        <dbReference type="ChEBI" id="CHEBI:29105"/>
    </ligand>
</feature>
<feature type="binding site" evidence="1">
    <location>
        <position position="71"/>
    </location>
    <ligand>
        <name>Zn(2+)</name>
        <dbReference type="ChEBI" id="CHEBI:29105"/>
    </ligand>
</feature>
<feature type="binding site" evidence="1">
    <location>
        <position position="87"/>
    </location>
    <ligand>
        <name>Zn(2+)</name>
        <dbReference type="ChEBI" id="CHEBI:29105"/>
    </ligand>
</feature>
<feature type="binding site" evidence="1">
    <location>
        <position position="90"/>
    </location>
    <ligand>
        <name>Zn(2+)</name>
        <dbReference type="ChEBI" id="CHEBI:29105"/>
    </ligand>
</feature>
<feature type="binding site" evidence="1">
    <location>
        <position position="489"/>
    </location>
    <ligand>
        <name>Mg(2+)</name>
        <dbReference type="ChEBI" id="CHEBI:18420"/>
    </ligand>
</feature>
<feature type="binding site" evidence="1">
    <location>
        <position position="491"/>
    </location>
    <ligand>
        <name>Mg(2+)</name>
        <dbReference type="ChEBI" id="CHEBI:18420"/>
    </ligand>
</feature>
<feature type="binding site" evidence="1">
    <location>
        <position position="493"/>
    </location>
    <ligand>
        <name>Mg(2+)</name>
        <dbReference type="ChEBI" id="CHEBI:18420"/>
    </ligand>
</feature>
<dbReference type="EC" id="2.7.7.6" evidence="1"/>
<dbReference type="EMBL" id="AB086179">
    <property type="protein sequence ID" value="BAC55327.1"/>
    <property type="molecule type" value="Genomic_DNA"/>
</dbReference>
<dbReference type="EMBL" id="AB087419">
    <property type="protein sequence ID" value="BAC55418.1"/>
    <property type="molecule type" value="mRNA"/>
</dbReference>
<dbReference type="RefSeq" id="NP_777391.1">
    <property type="nucleotide sequence ID" value="NC_004543.1"/>
</dbReference>
<dbReference type="SMR" id="Q85CL6"/>
<dbReference type="GeneID" id="2553424"/>
<dbReference type="GO" id="GO:0009507">
    <property type="term" value="C:chloroplast"/>
    <property type="evidence" value="ECO:0007669"/>
    <property type="project" value="UniProtKB-SubCell"/>
</dbReference>
<dbReference type="GO" id="GO:0000428">
    <property type="term" value="C:DNA-directed RNA polymerase complex"/>
    <property type="evidence" value="ECO:0007669"/>
    <property type="project" value="UniProtKB-KW"/>
</dbReference>
<dbReference type="GO" id="GO:0005739">
    <property type="term" value="C:mitochondrion"/>
    <property type="evidence" value="ECO:0007669"/>
    <property type="project" value="GOC"/>
</dbReference>
<dbReference type="GO" id="GO:0003677">
    <property type="term" value="F:DNA binding"/>
    <property type="evidence" value="ECO:0007669"/>
    <property type="project" value="UniProtKB-UniRule"/>
</dbReference>
<dbReference type="GO" id="GO:0003899">
    <property type="term" value="F:DNA-directed RNA polymerase activity"/>
    <property type="evidence" value="ECO:0007669"/>
    <property type="project" value="UniProtKB-UniRule"/>
</dbReference>
<dbReference type="GO" id="GO:0000287">
    <property type="term" value="F:magnesium ion binding"/>
    <property type="evidence" value="ECO:0007669"/>
    <property type="project" value="UniProtKB-UniRule"/>
</dbReference>
<dbReference type="GO" id="GO:0008270">
    <property type="term" value="F:zinc ion binding"/>
    <property type="evidence" value="ECO:0007669"/>
    <property type="project" value="UniProtKB-UniRule"/>
</dbReference>
<dbReference type="GO" id="GO:0006351">
    <property type="term" value="P:DNA-templated transcription"/>
    <property type="evidence" value="ECO:0007669"/>
    <property type="project" value="UniProtKB-UniRule"/>
</dbReference>
<dbReference type="Gene3D" id="1.10.40.90">
    <property type="match status" value="1"/>
</dbReference>
<dbReference type="Gene3D" id="2.40.40.20">
    <property type="match status" value="1"/>
</dbReference>
<dbReference type="Gene3D" id="4.10.860.120">
    <property type="entry name" value="RNA polymerase II, clamp domain"/>
    <property type="match status" value="1"/>
</dbReference>
<dbReference type="Gene3D" id="1.10.274.100">
    <property type="entry name" value="RNA polymerase Rpb1, domain 3"/>
    <property type="match status" value="1"/>
</dbReference>
<dbReference type="HAMAP" id="MF_01323">
    <property type="entry name" value="RNApol_bact_RpoC1"/>
    <property type="match status" value="1"/>
</dbReference>
<dbReference type="InterPro" id="IPR045867">
    <property type="entry name" value="DNA-dir_RpoC_beta_prime"/>
</dbReference>
<dbReference type="InterPro" id="IPR000722">
    <property type="entry name" value="RNA_pol_asu"/>
</dbReference>
<dbReference type="InterPro" id="IPR006592">
    <property type="entry name" value="RNA_pol_N"/>
</dbReference>
<dbReference type="InterPro" id="IPR007080">
    <property type="entry name" value="RNA_pol_Rpb1_1"/>
</dbReference>
<dbReference type="InterPro" id="IPR042102">
    <property type="entry name" value="RNA_pol_Rpb1_3_sf"/>
</dbReference>
<dbReference type="InterPro" id="IPR044893">
    <property type="entry name" value="RNA_pol_Rpb1_clamp_domain"/>
</dbReference>
<dbReference type="InterPro" id="IPR034678">
    <property type="entry name" value="RNApol_RpoC1"/>
</dbReference>
<dbReference type="PANTHER" id="PTHR19376">
    <property type="entry name" value="DNA-DIRECTED RNA POLYMERASE"/>
    <property type="match status" value="1"/>
</dbReference>
<dbReference type="PANTHER" id="PTHR19376:SF54">
    <property type="entry name" value="DNA-DIRECTED RNA POLYMERASE SUBUNIT BETA"/>
    <property type="match status" value="1"/>
</dbReference>
<dbReference type="Pfam" id="PF04997">
    <property type="entry name" value="RNA_pol_Rpb1_1"/>
    <property type="match status" value="1"/>
</dbReference>
<dbReference type="Pfam" id="PF00623">
    <property type="entry name" value="RNA_pol_Rpb1_2"/>
    <property type="match status" value="2"/>
</dbReference>
<dbReference type="SMART" id="SM00663">
    <property type="entry name" value="RPOLA_N"/>
    <property type="match status" value="1"/>
</dbReference>
<dbReference type="SUPFAM" id="SSF64484">
    <property type="entry name" value="beta and beta-prime subunits of DNA dependent RNA-polymerase"/>
    <property type="match status" value="1"/>
</dbReference>
<proteinExistence type="evidence at transcript level"/>
<sequence length="681" mass="78871">MIYQEENQHLRIGLASPEEIRGWAERTLPNGEVVGRITEPYTLHYKTHKPEKDGLFCERIFGPIKSGICACGKYRSIENQREYSKICEQCGVEFTESRVRRYRMGYIELACPVTHVWYLKRLPSYIANLLAKPLKELESLVYCDLFLARPIAKKPTLLKLRGLFKYEDQSWKEIFPRFFSPRGFEAFQDREVATGGNAIEKGLASLNLQIVMDRAYMEWRNLTEQKSTGNEWEDRKIQRRKDLLVRRMELAKNFLQTNMKPEWMVLSLLPVLPPELRPMIELGEGELITSDLNELYRRVIYRNNTLLDFLARGRSTPGGLVVCQKRLVQEAVDALIDNGIRGQPMRDSHNRAYKSFSDLIEGKEGRFRENLLGKRVDYSGRSVIVAGPYLPLHECGLPKEMAVELFQAFVIRGLIGRYLAPNLRAAKSMIQDKEPIIWKILKEVIQGHPVLLNRAPTLHRLGIQAFEPILVEGRAIRLHPLVCAGFNADFDGDQMAVHIPLSLEAQVEARLLMFSHTNLLSPVTGNPVSVPSQDMLLGIYVSTIRSNRGIYQNQYHPYDYRNKNFSYKMFYFHSYDDILKAEKQKQINLHSPLWLRWQVDLHIVTSIDREVPIEIQYESLGTSSQIYENYQFRKNRKEKILSMYICTTAGRILFNQQIEEAIQGFFEVSQHRSRPLPAIIA</sequence>
<organism>
    <name type="scientific">Anthoceros angustus</name>
    <name type="common">Hornwort</name>
    <name type="synonym">Anthoceros formosae</name>
    <dbReference type="NCBI Taxonomy" id="48387"/>
    <lineage>
        <taxon>Eukaryota</taxon>
        <taxon>Viridiplantae</taxon>
        <taxon>Streptophyta</taxon>
        <taxon>Embryophyta</taxon>
        <taxon>Anthocerotophyta</taxon>
        <taxon>Anthocerotopsida</taxon>
        <taxon>Anthocerotidae</taxon>
        <taxon>Anthocerotales</taxon>
        <taxon>Anthocerotaceae</taxon>
        <taxon>Anthoceros</taxon>
    </lineage>
</organism>
<geneLocation type="chloroplast"/>
<evidence type="ECO:0000255" key="1">
    <source>
        <dbReference type="HAMAP-Rule" id="MF_01323"/>
    </source>
</evidence>
<evidence type="ECO:0000269" key="2">
    <source>
    </source>
</evidence>
<evidence type="ECO:0000269" key="3">
    <source>
    </source>
</evidence>
<evidence type="ECO:0000305" key="4"/>